<proteinExistence type="inferred from homology"/>
<organism>
    <name type="scientific">Trieres chinensis</name>
    <name type="common">Marine centric diatom</name>
    <name type="synonym">Odontella sinensis</name>
    <dbReference type="NCBI Taxonomy" id="1514140"/>
    <lineage>
        <taxon>Eukaryota</taxon>
        <taxon>Sar</taxon>
        <taxon>Stramenopiles</taxon>
        <taxon>Ochrophyta</taxon>
        <taxon>Bacillariophyta</taxon>
        <taxon>Mediophyceae</taxon>
        <taxon>Biddulphiophycidae</taxon>
        <taxon>Eupodiscales</taxon>
        <taxon>Parodontellaceae</taxon>
        <taxon>Trieres</taxon>
    </lineage>
</organism>
<protein>
    <recommendedName>
        <fullName evidence="1">ATP synthase subunit b, chloroplastic</fullName>
    </recommendedName>
    <alternativeName>
        <fullName evidence="1">ATP synthase F(0) sector subunit b</fullName>
    </alternativeName>
    <alternativeName>
        <fullName evidence="1">ATPase subunit I</fullName>
    </alternativeName>
</protein>
<geneLocation type="chloroplast"/>
<comment type="function">
    <text evidence="1">F(1)F(0) ATP synthase produces ATP from ADP in the presence of a proton or sodium gradient. F-type ATPases consist of two structural domains, F(1) containing the extramembraneous catalytic core and F(0) containing the membrane proton channel, linked together by a central stalk and a peripheral stalk. During catalysis, ATP synthesis in the catalytic domain of F(1) is coupled via a rotary mechanism of the central stalk subunits to proton translocation.</text>
</comment>
<comment type="function">
    <text evidence="1">Component of the F(0) channel, it forms part of the peripheral stalk, linking F(1) to F(0).</text>
</comment>
<comment type="subunit">
    <text evidence="1">F-type ATPases have 2 components, F(1) - the catalytic core - and F(0) - the membrane proton channel. F(1) has five subunits: alpha(3), beta(3), gamma(1), delta(1), epsilon(1). F(0) has four main subunits: a(1), b(1), b'(1) and c(10-14). The alpha and beta chains form an alternating ring which encloses part of the gamma chain. F(1) is attached to F(0) by a central stalk formed by the gamma and epsilon chains, while a peripheral stalk is formed by the delta, b and b' chains.</text>
</comment>
<comment type="subcellular location">
    <subcellularLocation>
        <location evidence="1">Plastid</location>
        <location evidence="1">Chloroplast thylakoid membrane</location>
        <topology evidence="1">Single-pass membrane protein</topology>
    </subcellularLocation>
</comment>
<comment type="miscellaneous">
    <text>In plastids the F-type ATPase is also known as CF(1)CF(0).</text>
</comment>
<comment type="similarity">
    <text evidence="1">Belongs to the ATPase B chain family.</text>
</comment>
<evidence type="ECO:0000255" key="1">
    <source>
        <dbReference type="HAMAP-Rule" id="MF_01398"/>
    </source>
</evidence>
<dbReference type="EMBL" id="X60752">
    <property type="protein sequence ID" value="CAA43155.1"/>
    <property type="molecule type" value="Genomic_DNA"/>
</dbReference>
<dbReference type="EMBL" id="Z67753">
    <property type="protein sequence ID" value="CAA91692.1"/>
    <property type="molecule type" value="Genomic_DNA"/>
</dbReference>
<dbReference type="EMBL" id="X57701">
    <property type="status" value="NOT_ANNOTATED_CDS"/>
    <property type="molecule type" value="Genomic_DNA"/>
</dbReference>
<dbReference type="PIR" id="S23358">
    <property type="entry name" value="S23358"/>
</dbReference>
<dbReference type="RefSeq" id="NP_043660.1">
    <property type="nucleotide sequence ID" value="NC_001713.1"/>
</dbReference>
<dbReference type="SMR" id="Q00822"/>
<dbReference type="GeneID" id="801710"/>
<dbReference type="GO" id="GO:0009535">
    <property type="term" value="C:chloroplast thylakoid membrane"/>
    <property type="evidence" value="ECO:0007669"/>
    <property type="project" value="UniProtKB-SubCell"/>
</dbReference>
<dbReference type="GO" id="GO:0045259">
    <property type="term" value="C:proton-transporting ATP synthase complex"/>
    <property type="evidence" value="ECO:0007669"/>
    <property type="project" value="UniProtKB-KW"/>
</dbReference>
<dbReference type="GO" id="GO:0005524">
    <property type="term" value="F:ATP binding"/>
    <property type="evidence" value="ECO:0007669"/>
    <property type="project" value="UniProtKB-KW"/>
</dbReference>
<dbReference type="GO" id="GO:0046933">
    <property type="term" value="F:proton-transporting ATP synthase activity, rotational mechanism"/>
    <property type="evidence" value="ECO:0007669"/>
    <property type="project" value="UniProtKB-UniRule"/>
</dbReference>
<dbReference type="CDD" id="cd06503">
    <property type="entry name" value="ATP-synt_Fo_b"/>
    <property type="match status" value="1"/>
</dbReference>
<dbReference type="HAMAP" id="MF_01398">
    <property type="entry name" value="ATP_synth_b_bprime"/>
    <property type="match status" value="1"/>
</dbReference>
<dbReference type="InterPro" id="IPR002146">
    <property type="entry name" value="ATP_synth_b/b'su_bac/chlpt"/>
</dbReference>
<dbReference type="PANTHER" id="PTHR34264">
    <property type="entry name" value="ATP SYNTHASE SUBUNIT B, CHLOROPLASTIC"/>
    <property type="match status" value="1"/>
</dbReference>
<dbReference type="PANTHER" id="PTHR34264:SF3">
    <property type="entry name" value="ATP SYNTHASE SUBUNIT B, CHLOROPLASTIC"/>
    <property type="match status" value="1"/>
</dbReference>
<dbReference type="Pfam" id="PF00430">
    <property type="entry name" value="ATP-synt_B"/>
    <property type="match status" value="1"/>
</dbReference>
<accession>Q00822</accession>
<reference key="1">
    <citation type="journal article" date="1992" name="J. Mol. Biol.">
        <title>Chloroplast ATPase genes in the diatom Odontella sinensis reflect cyanobacterial characters in structure and arrangement.</title>
        <authorList>
            <person name="Pancic P.G."/>
            <person name="Strotmann H."/>
            <person name="Kowallik K.V."/>
        </authorList>
    </citation>
    <scope>NUCLEOTIDE SEQUENCE [GENOMIC DNA]</scope>
</reference>
<reference key="2">
    <citation type="journal article" date="1995" name="Plant Mol. Biol. Rep.">
        <title>The chloroplast genome of a chlorophyll a+c-containing alga, Odontella sinensis.</title>
        <authorList>
            <person name="Kowallik K.V."/>
            <person name="Stoebe B."/>
            <person name="Schaffran I."/>
            <person name="Kroth-Pancic P."/>
            <person name="Freier U."/>
        </authorList>
    </citation>
    <scope>NUCLEOTIDE SEQUENCE [LARGE SCALE GENOMIC DNA]</scope>
</reference>
<reference key="3">
    <citation type="journal article" date="1991" name="FEBS Lett.">
        <title>The delta subunit of the chloroplast ATPase is plastid-encoded in the diatom Odontella sinensis.</title>
        <authorList>
            <person name="Pancic P.G."/>
            <person name="Strotmann H."/>
            <person name="Kowallik K.V."/>
        </authorList>
    </citation>
    <scope>NUCLEOTIDE SEQUENCE [GENOMIC DNA] OF 141-179</scope>
</reference>
<feature type="chain" id="PRO_0000082416" description="ATP synthase subunit b, chloroplastic">
    <location>
        <begin position="1"/>
        <end position="179"/>
    </location>
</feature>
<feature type="transmembrane region" description="Helical" evidence="1">
    <location>
        <begin position="28"/>
        <end position="46"/>
    </location>
</feature>
<sequence length="179" mass="20074">MENFNQIFTLLAENEGIGLNTDILETGIINIAALVGILIYAGRDFLGSFLEQRKTSIVQGVQDAEGRLEEANRRLSEAQKQLSQAHIVISEIKNETISAKKVLLESDAYQAKKDLTTRFSRALATFRSKERQIFLEVKEQIILLVLKRTVARAQQTFGPKERATALITETINKLEGDLL</sequence>
<keyword id="KW-0066">ATP synthesis</keyword>
<keyword id="KW-0067">ATP-binding</keyword>
<keyword id="KW-0138">CF(0)</keyword>
<keyword id="KW-0150">Chloroplast</keyword>
<keyword id="KW-0375">Hydrogen ion transport</keyword>
<keyword id="KW-0406">Ion transport</keyword>
<keyword id="KW-0472">Membrane</keyword>
<keyword id="KW-0547">Nucleotide-binding</keyword>
<keyword id="KW-0934">Plastid</keyword>
<keyword id="KW-0793">Thylakoid</keyword>
<keyword id="KW-0812">Transmembrane</keyword>
<keyword id="KW-1133">Transmembrane helix</keyword>
<keyword id="KW-0813">Transport</keyword>
<gene>
    <name evidence="1" type="primary">atpF</name>
</gene>
<name>ATPF_TRICV</name>